<protein>
    <recommendedName>
        <fullName>Cyclin-C</fullName>
    </recommendedName>
</protein>
<organism>
    <name type="scientific">Anopheles gambiae</name>
    <name type="common">African malaria mosquito</name>
    <dbReference type="NCBI Taxonomy" id="7165"/>
    <lineage>
        <taxon>Eukaryota</taxon>
        <taxon>Metazoa</taxon>
        <taxon>Ecdysozoa</taxon>
        <taxon>Arthropoda</taxon>
        <taxon>Hexapoda</taxon>
        <taxon>Insecta</taxon>
        <taxon>Pterygota</taxon>
        <taxon>Neoptera</taxon>
        <taxon>Endopterygota</taxon>
        <taxon>Diptera</taxon>
        <taxon>Nematocera</taxon>
        <taxon>Culicoidea</taxon>
        <taxon>Culicidae</taxon>
        <taxon>Anophelinae</taxon>
        <taxon>Anopheles</taxon>
    </lineage>
</organism>
<sequence>MAGNFWQSSHHQQWILDKQDLIRERQHDLKTLSEEEYQKLFMFFANIIQVLGEQLKLRQQVIATATVYFKRFYARNSLKCIDPLLLAPTCILLSSKVEEFGVISNSRLITTCQTVIKNKFSYAYQQEFPYRTNHILECEFYLLENLDCCLIVYQPYRPLLQLMQDIGQEEQLLTLTWRLINDSLRTDVSLLYPPYQIAIGCLQIACVILQKELKSWFAELNVDMDKVQEIARAIVNLFELWKGYDEKKEIQALLEKMPKPKPHPQR</sequence>
<evidence type="ECO:0000250" key="1"/>
<evidence type="ECO:0000305" key="2"/>
<feature type="chain" id="PRO_0000314261" description="Cyclin-C">
    <location>
        <begin position="1"/>
        <end position="266"/>
    </location>
</feature>
<feature type="domain" description="Cyclin N-terminal">
    <location>
        <begin position="47"/>
        <end position="151"/>
    </location>
</feature>
<keyword id="KW-0010">Activator</keyword>
<keyword id="KW-0195">Cyclin</keyword>
<keyword id="KW-0539">Nucleus</keyword>
<keyword id="KW-1185">Reference proteome</keyword>
<keyword id="KW-0678">Repressor</keyword>
<keyword id="KW-0804">Transcription</keyword>
<keyword id="KW-0805">Transcription regulation</keyword>
<reference key="1">
    <citation type="journal article" date="2002" name="Science">
        <title>The genome sequence of the malaria mosquito Anopheles gambiae.</title>
        <authorList>
            <person name="Holt R.A."/>
            <person name="Subramanian G.M."/>
            <person name="Halpern A."/>
            <person name="Sutton G.G."/>
            <person name="Charlab R."/>
            <person name="Nusskern D.R."/>
            <person name="Wincker P."/>
            <person name="Clark A.G."/>
            <person name="Ribeiro J.M.C."/>
            <person name="Wides R."/>
            <person name="Salzberg S.L."/>
            <person name="Loftus B.J."/>
            <person name="Yandell M.D."/>
            <person name="Majoros W.H."/>
            <person name="Rusch D.B."/>
            <person name="Lai Z."/>
            <person name="Kraft C.L."/>
            <person name="Abril J.F."/>
            <person name="Anthouard V."/>
            <person name="Arensburger P."/>
            <person name="Atkinson P.W."/>
            <person name="Baden H."/>
            <person name="de Berardinis V."/>
            <person name="Baldwin D."/>
            <person name="Benes V."/>
            <person name="Biedler J."/>
            <person name="Blass C."/>
            <person name="Bolanos R."/>
            <person name="Boscus D."/>
            <person name="Barnstead M."/>
            <person name="Cai S."/>
            <person name="Center A."/>
            <person name="Chaturverdi K."/>
            <person name="Christophides G.K."/>
            <person name="Chrystal M.A.M."/>
            <person name="Clamp M."/>
            <person name="Cravchik A."/>
            <person name="Curwen V."/>
            <person name="Dana A."/>
            <person name="Delcher A."/>
            <person name="Dew I."/>
            <person name="Evans C.A."/>
            <person name="Flanigan M."/>
            <person name="Grundschober-Freimoser A."/>
            <person name="Friedli L."/>
            <person name="Gu Z."/>
            <person name="Guan P."/>
            <person name="Guigo R."/>
            <person name="Hillenmeyer M.E."/>
            <person name="Hladun S.L."/>
            <person name="Hogan J.R."/>
            <person name="Hong Y.S."/>
            <person name="Hoover J."/>
            <person name="Jaillon O."/>
            <person name="Ke Z."/>
            <person name="Kodira C.D."/>
            <person name="Kokoza E."/>
            <person name="Koutsos A."/>
            <person name="Letunic I."/>
            <person name="Levitsky A.A."/>
            <person name="Liang Y."/>
            <person name="Lin J.-J."/>
            <person name="Lobo N.F."/>
            <person name="Lopez J.R."/>
            <person name="Malek J.A."/>
            <person name="McIntosh T.C."/>
            <person name="Meister S."/>
            <person name="Miller J.R."/>
            <person name="Mobarry C."/>
            <person name="Mongin E."/>
            <person name="Murphy S.D."/>
            <person name="O'Brochta D.A."/>
            <person name="Pfannkoch C."/>
            <person name="Qi R."/>
            <person name="Regier M.A."/>
            <person name="Remington K."/>
            <person name="Shao H."/>
            <person name="Sharakhova M.V."/>
            <person name="Sitter C.D."/>
            <person name="Shetty J."/>
            <person name="Smith T.J."/>
            <person name="Strong R."/>
            <person name="Sun J."/>
            <person name="Thomasova D."/>
            <person name="Ton L.Q."/>
            <person name="Topalis P."/>
            <person name="Tu Z.J."/>
            <person name="Unger M.F."/>
            <person name="Walenz B."/>
            <person name="Wang A.H."/>
            <person name="Wang J."/>
            <person name="Wang M."/>
            <person name="Wang X."/>
            <person name="Woodford K.J."/>
            <person name="Wortman J.R."/>
            <person name="Wu M."/>
            <person name="Yao A."/>
            <person name="Zdobnov E.M."/>
            <person name="Zhang H."/>
            <person name="Zhao Q."/>
            <person name="Zhao S."/>
            <person name="Zhu S.C."/>
            <person name="Zhimulev I."/>
            <person name="Coluzzi M."/>
            <person name="della Torre A."/>
            <person name="Roth C.W."/>
            <person name="Louis C."/>
            <person name="Kalush F."/>
            <person name="Mural R.J."/>
            <person name="Myers E.W."/>
            <person name="Adams M.D."/>
            <person name="Smith H.O."/>
            <person name="Broder S."/>
            <person name="Gardner M.J."/>
            <person name="Fraser C.M."/>
            <person name="Birney E."/>
            <person name="Bork P."/>
            <person name="Brey P.T."/>
            <person name="Venter J.C."/>
            <person name="Weissenbach J."/>
            <person name="Kafatos F.C."/>
            <person name="Collins F.H."/>
            <person name="Hoffman S.L."/>
        </authorList>
    </citation>
    <scope>NUCLEOTIDE SEQUENCE [LARGE SCALE GENOMIC DNA]</scope>
    <source>
        <strain>PEST</strain>
    </source>
</reference>
<name>CCNC_ANOGA</name>
<gene>
    <name type="primary">CycC</name>
    <name type="ORF">AGAP004240</name>
</gene>
<dbReference type="EMBL" id="AAAB01008880">
    <property type="protein sequence ID" value="EAA08619.2"/>
    <property type="molecule type" value="Genomic_DNA"/>
</dbReference>
<dbReference type="SMR" id="Q7QB13"/>
<dbReference type="FunCoup" id="Q7QB13">
    <property type="interactions" value="2455"/>
</dbReference>
<dbReference type="STRING" id="7165.Q7QB13"/>
<dbReference type="PaxDb" id="7165-AGAP004240-PA"/>
<dbReference type="EnsemblMetazoa" id="AGAP004240-RA">
    <property type="protein sequence ID" value="AGAP004240-PA"/>
    <property type="gene ID" value="AGAP004240"/>
</dbReference>
<dbReference type="GeneID" id="1274085"/>
<dbReference type="KEGG" id="aga:1274085"/>
<dbReference type="VEuPathDB" id="VectorBase:AGAMI1_002729"/>
<dbReference type="VEuPathDB" id="VectorBase:AGAP004240"/>
<dbReference type="eggNOG" id="KOG0794">
    <property type="taxonomic scope" value="Eukaryota"/>
</dbReference>
<dbReference type="HOGENOM" id="CLU_034754_1_1_1"/>
<dbReference type="InParanoid" id="Q7QB13"/>
<dbReference type="OMA" id="CLLHPPH"/>
<dbReference type="OrthoDB" id="10266018at2759"/>
<dbReference type="PhylomeDB" id="Q7QB13"/>
<dbReference type="Proteomes" id="UP000007062">
    <property type="component" value="Chromosome 2R"/>
</dbReference>
<dbReference type="GO" id="GO:0016592">
    <property type="term" value="C:mediator complex"/>
    <property type="evidence" value="ECO:0000318"/>
    <property type="project" value="GO_Central"/>
</dbReference>
<dbReference type="GO" id="GO:0005634">
    <property type="term" value="C:nucleus"/>
    <property type="evidence" value="ECO:0000318"/>
    <property type="project" value="GO_Central"/>
</dbReference>
<dbReference type="GO" id="GO:0016538">
    <property type="term" value="F:cyclin-dependent protein serine/threonine kinase regulator activity"/>
    <property type="evidence" value="ECO:0000318"/>
    <property type="project" value="GO_Central"/>
</dbReference>
<dbReference type="GO" id="GO:0045944">
    <property type="term" value="P:positive regulation of transcription by RNA polymerase II"/>
    <property type="evidence" value="ECO:0000318"/>
    <property type="project" value="GO_Central"/>
</dbReference>
<dbReference type="CDD" id="cd20513">
    <property type="entry name" value="CYCLIN_CCNC_rpt1"/>
    <property type="match status" value="1"/>
</dbReference>
<dbReference type="CDD" id="cd20514">
    <property type="entry name" value="CYCLIN_CCNC_rpt2"/>
    <property type="match status" value="1"/>
</dbReference>
<dbReference type="FunFam" id="1.10.472.10:FF:000015">
    <property type="entry name" value="Putative cyclin-c"/>
    <property type="match status" value="1"/>
</dbReference>
<dbReference type="Gene3D" id="1.10.472.10">
    <property type="entry name" value="Cyclin-like"/>
    <property type="match status" value="2"/>
</dbReference>
<dbReference type="InterPro" id="IPR013763">
    <property type="entry name" value="Cyclin-like_dom"/>
</dbReference>
<dbReference type="InterPro" id="IPR036915">
    <property type="entry name" value="Cyclin-like_sf"/>
</dbReference>
<dbReference type="InterPro" id="IPR043198">
    <property type="entry name" value="Cyclin/Ssn8"/>
</dbReference>
<dbReference type="InterPro" id="IPR031658">
    <property type="entry name" value="Cyclin_C_2"/>
</dbReference>
<dbReference type="InterPro" id="IPR006671">
    <property type="entry name" value="Cyclin_N"/>
</dbReference>
<dbReference type="PANTHER" id="PTHR10026">
    <property type="entry name" value="CYCLIN"/>
    <property type="match status" value="1"/>
</dbReference>
<dbReference type="Pfam" id="PF16899">
    <property type="entry name" value="Cyclin_C_2"/>
    <property type="match status" value="1"/>
</dbReference>
<dbReference type="Pfam" id="PF00134">
    <property type="entry name" value="Cyclin_N"/>
    <property type="match status" value="1"/>
</dbReference>
<dbReference type="PIRSF" id="PIRSF028758">
    <property type="entry name" value="Cyclin, C/H/G types"/>
    <property type="match status" value="1"/>
</dbReference>
<dbReference type="SMART" id="SM00385">
    <property type="entry name" value="CYCLIN"/>
    <property type="match status" value="2"/>
</dbReference>
<dbReference type="SUPFAM" id="SSF47954">
    <property type="entry name" value="Cyclin-like"/>
    <property type="match status" value="2"/>
</dbReference>
<comment type="function">
    <text evidence="1">Component of the Mediator complex, a coactivator involved in regulated gene transcription of nearly all RNA polymerase II-dependent genes. Mediator functions as a bridge to convey information from gene-specific regulatory proteins to the basal RNA polymerase II transcription machinery. Mediator is recruited to promoters by direct interactions with regulatory proteins and serves as a scaffold for the assembly of a functional preinitiation complex with RNA polymerase II and the general transcription factors. Binds to and activates cyclin-dependent kinase Cdk8 that phosphorylates the CTD (C-terminal domain) of the large subunit of RNA polymerase II (RNAp II), which may inhibit the formation of a transcription initiation complex (By similarity).</text>
</comment>
<comment type="subunit">
    <text evidence="1">Component of the Cdk8 module of the Mediator complex.</text>
</comment>
<comment type="subcellular location">
    <subcellularLocation>
        <location evidence="1">Nucleus</location>
    </subcellularLocation>
</comment>
<comment type="similarity">
    <text evidence="2">Belongs to the cyclin family. Cyclin C subfamily.</text>
</comment>
<proteinExistence type="inferred from homology"/>
<accession>Q7QB13</accession>